<organism>
    <name type="scientific">Salmonella paratyphi C (strain RKS4594)</name>
    <dbReference type="NCBI Taxonomy" id="476213"/>
    <lineage>
        <taxon>Bacteria</taxon>
        <taxon>Pseudomonadati</taxon>
        <taxon>Pseudomonadota</taxon>
        <taxon>Gammaproteobacteria</taxon>
        <taxon>Enterobacterales</taxon>
        <taxon>Enterobacteriaceae</taxon>
        <taxon>Salmonella</taxon>
    </lineage>
</organism>
<comment type="function">
    <text evidence="1">Involved in the biosynthesis of lipid A, a phosphorylated glycolipid that anchors the lipopolysaccharide to the outer membrane of the cell.</text>
</comment>
<comment type="catalytic activity">
    <reaction evidence="1">
        <text>a (3R)-hydroxyacyl-[ACP] + UDP-N-acetyl-alpha-D-glucosamine = a UDP-3-O-[(3R)-3-hydroxyacyl]-N-acetyl-alpha-D-glucosamine + holo-[ACP]</text>
        <dbReference type="Rhea" id="RHEA:67812"/>
        <dbReference type="Rhea" id="RHEA-COMP:9685"/>
        <dbReference type="Rhea" id="RHEA-COMP:9945"/>
        <dbReference type="ChEBI" id="CHEBI:57705"/>
        <dbReference type="ChEBI" id="CHEBI:64479"/>
        <dbReference type="ChEBI" id="CHEBI:78827"/>
        <dbReference type="ChEBI" id="CHEBI:173225"/>
        <dbReference type="EC" id="2.3.1.129"/>
    </reaction>
</comment>
<comment type="pathway">
    <text evidence="1">Glycolipid biosynthesis; lipid IV(A) biosynthesis; lipid IV(A) from (3R)-3-hydroxytetradecanoyl-[acyl-carrier-protein] and UDP-N-acetyl-alpha-D-glucosamine: step 1/6.</text>
</comment>
<comment type="subunit">
    <text evidence="1">Homotrimer.</text>
</comment>
<comment type="subcellular location">
    <subcellularLocation>
        <location evidence="1">Cytoplasm</location>
    </subcellularLocation>
</comment>
<comment type="similarity">
    <text evidence="1">Belongs to the transferase hexapeptide repeat family. LpxA subfamily.</text>
</comment>
<protein>
    <recommendedName>
        <fullName evidence="1">Acyl-[acyl-carrier-protein]--UDP-N-acetylglucosamine O-acyltransferase</fullName>
        <shortName evidence="1">UDP-N-acetylglucosamine acyltransferase</shortName>
        <ecNumber evidence="1">2.3.1.129</ecNumber>
    </recommendedName>
</protein>
<evidence type="ECO:0000255" key="1">
    <source>
        <dbReference type="HAMAP-Rule" id="MF_00387"/>
    </source>
</evidence>
<accession>C0Q6K4</accession>
<sequence length="262" mass="28089">MIDKSAFIHPTAIVEDGAVIGANAHIGPFCIVGPQVEIGEGTVLKSHVVVNGQTKIGRDNEIYQFASIGEVNQDLKYAGEPTRVEIGDRNRIRESVTIHRGTVQGGGLTKVGSDNLLMINAHVAHDCTVGNRCILANNATLAGHVSVDDFAIIGGMTAVHQFCIIGAHVMVGGCSGVAQDVPPYVIAQGNHATPFGVNIEGLKRRGFSREGLVAIRNAYKLLYRSGKTLDEAKLEIAELAEKHPEVKAFTEFFERSTRGPIR</sequence>
<reference key="1">
    <citation type="journal article" date="2009" name="PLoS ONE">
        <title>Salmonella paratyphi C: genetic divergence from Salmonella choleraesuis and pathogenic convergence with Salmonella typhi.</title>
        <authorList>
            <person name="Liu W.-Q."/>
            <person name="Feng Y."/>
            <person name="Wang Y."/>
            <person name="Zou Q.-H."/>
            <person name="Chen F."/>
            <person name="Guo J.-T."/>
            <person name="Peng Y.-H."/>
            <person name="Jin Y."/>
            <person name="Li Y.-G."/>
            <person name="Hu S.-N."/>
            <person name="Johnston R.N."/>
            <person name="Liu G.-R."/>
            <person name="Liu S.-L."/>
        </authorList>
    </citation>
    <scope>NUCLEOTIDE SEQUENCE [LARGE SCALE GENOMIC DNA]</scope>
    <source>
        <strain>RKS4594</strain>
    </source>
</reference>
<dbReference type="EC" id="2.3.1.129" evidence="1"/>
<dbReference type="EMBL" id="CP000857">
    <property type="protein sequence ID" value="ACN44433.1"/>
    <property type="molecule type" value="Genomic_DNA"/>
</dbReference>
<dbReference type="RefSeq" id="WP_000565950.1">
    <property type="nucleotide sequence ID" value="NC_012125.1"/>
</dbReference>
<dbReference type="SMR" id="C0Q6K4"/>
<dbReference type="KEGG" id="sei:SPC_0244"/>
<dbReference type="HOGENOM" id="CLU_061249_0_0_6"/>
<dbReference type="UniPathway" id="UPA00359">
    <property type="reaction ID" value="UER00477"/>
</dbReference>
<dbReference type="Proteomes" id="UP000001599">
    <property type="component" value="Chromosome"/>
</dbReference>
<dbReference type="GO" id="GO:0005737">
    <property type="term" value="C:cytoplasm"/>
    <property type="evidence" value="ECO:0007669"/>
    <property type="project" value="UniProtKB-SubCell"/>
</dbReference>
<dbReference type="GO" id="GO:0016020">
    <property type="term" value="C:membrane"/>
    <property type="evidence" value="ECO:0007669"/>
    <property type="project" value="GOC"/>
</dbReference>
<dbReference type="GO" id="GO:0008780">
    <property type="term" value="F:acyl-[acyl-carrier-protein]-UDP-N-acetylglucosamine O-acyltransferase activity"/>
    <property type="evidence" value="ECO:0007669"/>
    <property type="project" value="UniProtKB-UniRule"/>
</dbReference>
<dbReference type="GO" id="GO:0009245">
    <property type="term" value="P:lipid A biosynthetic process"/>
    <property type="evidence" value="ECO:0007669"/>
    <property type="project" value="UniProtKB-UniRule"/>
</dbReference>
<dbReference type="CDD" id="cd03351">
    <property type="entry name" value="LbH_UDP-GlcNAc_AT"/>
    <property type="match status" value="1"/>
</dbReference>
<dbReference type="FunFam" id="2.160.10.10:FF:000003">
    <property type="entry name" value="Acyl-[acyl-carrier-protein]--UDP-N-acetylglucosamine O-acyltransferase"/>
    <property type="match status" value="1"/>
</dbReference>
<dbReference type="Gene3D" id="2.160.10.10">
    <property type="entry name" value="Hexapeptide repeat proteins"/>
    <property type="match status" value="1"/>
</dbReference>
<dbReference type="Gene3D" id="1.20.1180.10">
    <property type="entry name" value="Udp N-acetylglucosamine O-acyltransferase, C-terminal domain"/>
    <property type="match status" value="1"/>
</dbReference>
<dbReference type="HAMAP" id="MF_00387">
    <property type="entry name" value="LpxA"/>
    <property type="match status" value="1"/>
</dbReference>
<dbReference type="InterPro" id="IPR029098">
    <property type="entry name" value="Acetyltransf_C"/>
</dbReference>
<dbReference type="InterPro" id="IPR037157">
    <property type="entry name" value="Acetyltransf_C_sf"/>
</dbReference>
<dbReference type="InterPro" id="IPR001451">
    <property type="entry name" value="Hexapep"/>
</dbReference>
<dbReference type="InterPro" id="IPR018357">
    <property type="entry name" value="Hexapep_transf_CS"/>
</dbReference>
<dbReference type="InterPro" id="IPR010137">
    <property type="entry name" value="Lipid_A_LpxA"/>
</dbReference>
<dbReference type="InterPro" id="IPR011004">
    <property type="entry name" value="Trimer_LpxA-like_sf"/>
</dbReference>
<dbReference type="NCBIfam" id="TIGR01852">
    <property type="entry name" value="lipid_A_lpxA"/>
    <property type="match status" value="1"/>
</dbReference>
<dbReference type="NCBIfam" id="NF003657">
    <property type="entry name" value="PRK05289.1"/>
    <property type="match status" value="1"/>
</dbReference>
<dbReference type="PANTHER" id="PTHR43480">
    <property type="entry name" value="ACYL-[ACYL-CARRIER-PROTEIN]--UDP-N-ACETYLGLUCOSAMINE O-ACYLTRANSFERASE"/>
    <property type="match status" value="1"/>
</dbReference>
<dbReference type="PANTHER" id="PTHR43480:SF1">
    <property type="entry name" value="ACYL-[ACYL-CARRIER-PROTEIN]--UDP-N-ACETYLGLUCOSAMINE O-ACYLTRANSFERASE, MITOCHONDRIAL-RELATED"/>
    <property type="match status" value="1"/>
</dbReference>
<dbReference type="Pfam" id="PF13720">
    <property type="entry name" value="Acetyltransf_11"/>
    <property type="match status" value="1"/>
</dbReference>
<dbReference type="Pfam" id="PF00132">
    <property type="entry name" value="Hexapep"/>
    <property type="match status" value="2"/>
</dbReference>
<dbReference type="PIRSF" id="PIRSF000456">
    <property type="entry name" value="UDP-GlcNAc_acltr"/>
    <property type="match status" value="1"/>
</dbReference>
<dbReference type="SUPFAM" id="SSF51161">
    <property type="entry name" value="Trimeric LpxA-like enzymes"/>
    <property type="match status" value="1"/>
</dbReference>
<dbReference type="PROSITE" id="PS00101">
    <property type="entry name" value="HEXAPEP_TRANSFERASES"/>
    <property type="match status" value="2"/>
</dbReference>
<keyword id="KW-0012">Acyltransferase</keyword>
<keyword id="KW-0963">Cytoplasm</keyword>
<keyword id="KW-0441">Lipid A biosynthesis</keyword>
<keyword id="KW-0444">Lipid biosynthesis</keyword>
<keyword id="KW-0443">Lipid metabolism</keyword>
<keyword id="KW-0677">Repeat</keyword>
<keyword id="KW-0808">Transferase</keyword>
<feature type="chain" id="PRO_1000134389" description="Acyl-[acyl-carrier-protein]--UDP-N-acetylglucosamine O-acyltransferase">
    <location>
        <begin position="1"/>
        <end position="262"/>
    </location>
</feature>
<gene>
    <name evidence="1" type="primary">lpxA</name>
    <name type="ordered locus">SPC_0244</name>
</gene>
<proteinExistence type="inferred from homology"/>
<name>LPXA_SALPC</name>